<protein>
    <recommendedName>
        <fullName evidence="2">D-alanine--D-alanine ligase</fullName>
        <ecNumber evidence="2">6.3.2.4</ecNumber>
    </recommendedName>
    <alternativeName>
        <fullName evidence="2">D-Ala-D-Ala ligase</fullName>
    </alternativeName>
    <alternativeName>
        <fullName evidence="2">D-alanylalanine synthetase</fullName>
    </alternativeName>
</protein>
<dbReference type="EC" id="6.3.2.4" evidence="2"/>
<dbReference type="EMBL" id="AP009256">
    <property type="protein sequence ID" value="BAF38967.1"/>
    <property type="molecule type" value="Genomic_DNA"/>
</dbReference>
<dbReference type="RefSeq" id="WP_011742720.1">
    <property type="nucleotide sequence ID" value="NC_008618.1"/>
</dbReference>
<dbReference type="SMR" id="A0ZZT4"/>
<dbReference type="STRING" id="367928.BAD_0186"/>
<dbReference type="PaxDb" id="1680-BADO_0194"/>
<dbReference type="GeneID" id="4556245"/>
<dbReference type="KEGG" id="bad:BAD_0186"/>
<dbReference type="HOGENOM" id="CLU_039268_0_1_11"/>
<dbReference type="UniPathway" id="UPA00219"/>
<dbReference type="Proteomes" id="UP000008702">
    <property type="component" value="Chromosome"/>
</dbReference>
<dbReference type="GO" id="GO:0005829">
    <property type="term" value="C:cytosol"/>
    <property type="evidence" value="ECO:0007669"/>
    <property type="project" value="TreeGrafter"/>
</dbReference>
<dbReference type="GO" id="GO:0005524">
    <property type="term" value="F:ATP binding"/>
    <property type="evidence" value="ECO:0007669"/>
    <property type="project" value="UniProtKB-KW"/>
</dbReference>
<dbReference type="GO" id="GO:0008716">
    <property type="term" value="F:D-alanine-D-alanine ligase activity"/>
    <property type="evidence" value="ECO:0007669"/>
    <property type="project" value="UniProtKB-UniRule"/>
</dbReference>
<dbReference type="GO" id="GO:0046872">
    <property type="term" value="F:metal ion binding"/>
    <property type="evidence" value="ECO:0007669"/>
    <property type="project" value="UniProtKB-KW"/>
</dbReference>
<dbReference type="GO" id="GO:0071555">
    <property type="term" value="P:cell wall organization"/>
    <property type="evidence" value="ECO:0007669"/>
    <property type="project" value="UniProtKB-KW"/>
</dbReference>
<dbReference type="GO" id="GO:0009252">
    <property type="term" value="P:peptidoglycan biosynthetic process"/>
    <property type="evidence" value="ECO:0007669"/>
    <property type="project" value="UniProtKB-UniRule"/>
</dbReference>
<dbReference type="GO" id="GO:0008360">
    <property type="term" value="P:regulation of cell shape"/>
    <property type="evidence" value="ECO:0007669"/>
    <property type="project" value="UniProtKB-KW"/>
</dbReference>
<dbReference type="FunFam" id="3.30.470.20:FF:000008">
    <property type="entry name" value="D-alanine--D-alanine ligase"/>
    <property type="match status" value="1"/>
</dbReference>
<dbReference type="Gene3D" id="3.40.50.20">
    <property type="match status" value="1"/>
</dbReference>
<dbReference type="Gene3D" id="3.30.1490.20">
    <property type="entry name" value="ATP-grasp fold, A domain"/>
    <property type="match status" value="1"/>
</dbReference>
<dbReference type="Gene3D" id="3.30.470.20">
    <property type="entry name" value="ATP-grasp fold, B domain"/>
    <property type="match status" value="1"/>
</dbReference>
<dbReference type="HAMAP" id="MF_00047">
    <property type="entry name" value="Dala_Dala_lig"/>
    <property type="match status" value="1"/>
</dbReference>
<dbReference type="InterPro" id="IPR011761">
    <property type="entry name" value="ATP-grasp"/>
</dbReference>
<dbReference type="InterPro" id="IPR013815">
    <property type="entry name" value="ATP_grasp_subdomain_1"/>
</dbReference>
<dbReference type="InterPro" id="IPR000291">
    <property type="entry name" value="D-Ala_lig_Van_CS"/>
</dbReference>
<dbReference type="InterPro" id="IPR005905">
    <property type="entry name" value="D_ala_D_ala"/>
</dbReference>
<dbReference type="InterPro" id="IPR011095">
    <property type="entry name" value="Dala_Dala_lig_C"/>
</dbReference>
<dbReference type="InterPro" id="IPR011127">
    <property type="entry name" value="Dala_Dala_lig_N"/>
</dbReference>
<dbReference type="InterPro" id="IPR016185">
    <property type="entry name" value="PreATP-grasp_dom_sf"/>
</dbReference>
<dbReference type="NCBIfam" id="TIGR01205">
    <property type="entry name" value="D_ala_D_alaTIGR"/>
    <property type="match status" value="1"/>
</dbReference>
<dbReference type="NCBIfam" id="NF002528">
    <property type="entry name" value="PRK01966.1-4"/>
    <property type="match status" value="1"/>
</dbReference>
<dbReference type="PANTHER" id="PTHR23132">
    <property type="entry name" value="D-ALANINE--D-ALANINE LIGASE"/>
    <property type="match status" value="1"/>
</dbReference>
<dbReference type="PANTHER" id="PTHR23132:SF25">
    <property type="entry name" value="D-ALANINE--D-ALANINE LIGASE A"/>
    <property type="match status" value="1"/>
</dbReference>
<dbReference type="Pfam" id="PF07478">
    <property type="entry name" value="Dala_Dala_lig_C"/>
    <property type="match status" value="1"/>
</dbReference>
<dbReference type="Pfam" id="PF01820">
    <property type="entry name" value="Dala_Dala_lig_N"/>
    <property type="match status" value="1"/>
</dbReference>
<dbReference type="PIRSF" id="PIRSF039102">
    <property type="entry name" value="Ddl/VanB"/>
    <property type="match status" value="1"/>
</dbReference>
<dbReference type="SUPFAM" id="SSF56059">
    <property type="entry name" value="Glutathione synthetase ATP-binding domain-like"/>
    <property type="match status" value="1"/>
</dbReference>
<dbReference type="SUPFAM" id="SSF52440">
    <property type="entry name" value="PreATP-grasp domain"/>
    <property type="match status" value="1"/>
</dbReference>
<dbReference type="PROSITE" id="PS50975">
    <property type="entry name" value="ATP_GRASP"/>
    <property type="match status" value="1"/>
</dbReference>
<dbReference type="PROSITE" id="PS00843">
    <property type="entry name" value="DALA_DALA_LIGASE_1"/>
    <property type="match status" value="1"/>
</dbReference>
<dbReference type="PROSITE" id="PS00844">
    <property type="entry name" value="DALA_DALA_LIGASE_2"/>
    <property type="match status" value="1"/>
</dbReference>
<comment type="function">
    <text evidence="2">Cell wall formation.</text>
</comment>
<comment type="catalytic activity">
    <reaction evidence="2">
        <text>2 D-alanine + ATP = D-alanyl-D-alanine + ADP + phosphate + H(+)</text>
        <dbReference type="Rhea" id="RHEA:11224"/>
        <dbReference type="ChEBI" id="CHEBI:15378"/>
        <dbReference type="ChEBI" id="CHEBI:30616"/>
        <dbReference type="ChEBI" id="CHEBI:43474"/>
        <dbReference type="ChEBI" id="CHEBI:57416"/>
        <dbReference type="ChEBI" id="CHEBI:57822"/>
        <dbReference type="ChEBI" id="CHEBI:456216"/>
        <dbReference type="EC" id="6.3.2.4"/>
    </reaction>
</comment>
<comment type="cofactor">
    <cofactor evidence="1">
        <name>Mg(2+)</name>
        <dbReference type="ChEBI" id="CHEBI:18420"/>
    </cofactor>
    <cofactor evidence="1">
        <name>Mn(2+)</name>
        <dbReference type="ChEBI" id="CHEBI:29035"/>
    </cofactor>
    <text evidence="1">Binds 2 magnesium or manganese ions per subunit.</text>
</comment>
<comment type="pathway">
    <text evidence="2">Cell wall biogenesis; peptidoglycan biosynthesis.</text>
</comment>
<comment type="subcellular location">
    <subcellularLocation>
        <location evidence="2">Cytoplasm</location>
    </subcellularLocation>
</comment>
<comment type="similarity">
    <text evidence="2">Belongs to the D-alanine--D-alanine ligase family.</text>
</comment>
<evidence type="ECO:0000250" key="1"/>
<evidence type="ECO:0000255" key="2">
    <source>
        <dbReference type="HAMAP-Rule" id="MF_00047"/>
    </source>
</evidence>
<sequence>MAKKRIVVMYGGKADEHSISCISAASALRALDTDKFEAIPVGITKDGKWIVNGENPLGWSLDEGLPTVEKTPGAKDVVLEVALGQDGFFAREDDGTMTPFGHVDAVFPVLHGPYGEDGTIQGLFEMMGVPYVGCGVLASAACMDKHYTKVLLAAAGIPVAPGITLDARSFDKASEFKTDADAIMAQVSEAGLQYPLFVKPSRAGSSFGVTKVEHEGDAAELAAAVYEASRHDWRILVEQGIDAREIECAVLCPKAGEAPQASWPGEIVLDKRAEGDDQFYDFDSKYMDAAASHVEVPANLPEETLNLVRETAKKAFVAVDGAGLSRVDTFVTKDGKVMVNEINTMPGFTSISMYPKAWEATGVRYTDLITKLIEGVLR</sequence>
<reference key="1">
    <citation type="submission" date="2006-12" db="EMBL/GenBank/DDBJ databases">
        <title>Bifidobacterium adolescentis complete genome sequence.</title>
        <authorList>
            <person name="Suzuki T."/>
            <person name="Tsuda Y."/>
            <person name="Kanou N."/>
            <person name="Inoue T."/>
            <person name="Kumazaki K."/>
            <person name="Nagano S."/>
            <person name="Hirai S."/>
            <person name="Tanaka K."/>
            <person name="Watanabe K."/>
        </authorList>
    </citation>
    <scope>NUCLEOTIDE SEQUENCE [LARGE SCALE GENOMIC DNA]</scope>
    <source>
        <strain>ATCC 15703 / DSM 20083 / NCTC 11814 / E194a</strain>
    </source>
</reference>
<proteinExistence type="inferred from homology"/>
<keyword id="KW-0067">ATP-binding</keyword>
<keyword id="KW-0133">Cell shape</keyword>
<keyword id="KW-0961">Cell wall biogenesis/degradation</keyword>
<keyword id="KW-0963">Cytoplasm</keyword>
<keyword id="KW-0436">Ligase</keyword>
<keyword id="KW-0460">Magnesium</keyword>
<keyword id="KW-0464">Manganese</keyword>
<keyword id="KW-0479">Metal-binding</keyword>
<keyword id="KW-0547">Nucleotide-binding</keyword>
<keyword id="KW-0573">Peptidoglycan synthesis</keyword>
<keyword id="KW-1185">Reference proteome</keyword>
<feature type="chain" id="PRO_1000030432" description="D-alanine--D-alanine ligase">
    <location>
        <begin position="1"/>
        <end position="378"/>
    </location>
</feature>
<feature type="domain" description="ATP-grasp" evidence="2">
    <location>
        <begin position="149"/>
        <end position="374"/>
    </location>
</feature>
<feature type="binding site" evidence="2">
    <location>
        <begin position="189"/>
        <end position="247"/>
    </location>
    <ligand>
        <name>ATP</name>
        <dbReference type="ChEBI" id="CHEBI:30616"/>
    </ligand>
</feature>
<feature type="binding site" evidence="2">
    <location>
        <position position="328"/>
    </location>
    <ligand>
        <name>Mg(2+)</name>
        <dbReference type="ChEBI" id="CHEBI:18420"/>
        <label>1</label>
    </ligand>
</feature>
<feature type="binding site" evidence="2">
    <location>
        <position position="341"/>
    </location>
    <ligand>
        <name>Mg(2+)</name>
        <dbReference type="ChEBI" id="CHEBI:18420"/>
        <label>1</label>
    </ligand>
</feature>
<feature type="binding site" evidence="2">
    <location>
        <position position="341"/>
    </location>
    <ligand>
        <name>Mg(2+)</name>
        <dbReference type="ChEBI" id="CHEBI:18420"/>
        <label>2</label>
    </ligand>
</feature>
<feature type="binding site" evidence="2">
    <location>
        <position position="343"/>
    </location>
    <ligand>
        <name>Mg(2+)</name>
        <dbReference type="ChEBI" id="CHEBI:18420"/>
        <label>2</label>
    </ligand>
</feature>
<gene>
    <name evidence="2" type="primary">ddl</name>
    <name type="ordered locus">BAD_0186</name>
</gene>
<name>DDL_BIFAA</name>
<organism>
    <name type="scientific">Bifidobacterium adolescentis (strain ATCC 15703 / DSM 20083 / NCTC 11814 / E194a)</name>
    <dbReference type="NCBI Taxonomy" id="367928"/>
    <lineage>
        <taxon>Bacteria</taxon>
        <taxon>Bacillati</taxon>
        <taxon>Actinomycetota</taxon>
        <taxon>Actinomycetes</taxon>
        <taxon>Bifidobacteriales</taxon>
        <taxon>Bifidobacteriaceae</taxon>
        <taxon>Bifidobacterium</taxon>
    </lineage>
</organism>
<accession>A0ZZT4</accession>